<feature type="initiator methionine" description="Removed" evidence="1">
    <location>
        <position position="1"/>
    </location>
</feature>
<feature type="chain" id="PRO_1000008762" description="Formamidopyrimidine-DNA glycosylase">
    <location>
        <begin position="2"/>
        <end position="273"/>
    </location>
</feature>
<feature type="zinc finger region" description="FPG-type" evidence="2">
    <location>
        <begin position="238"/>
        <end position="272"/>
    </location>
</feature>
<feature type="active site" description="Schiff-base intermediate with DNA" evidence="2">
    <location>
        <position position="2"/>
    </location>
</feature>
<feature type="active site" description="Proton donor" evidence="2">
    <location>
        <position position="3"/>
    </location>
</feature>
<feature type="active site" description="Proton donor; for beta-elimination activity" evidence="2">
    <location>
        <position position="58"/>
    </location>
</feature>
<feature type="active site" description="Proton donor; for delta-elimination activity" evidence="2">
    <location>
        <position position="262"/>
    </location>
</feature>
<feature type="binding site" evidence="2">
    <location>
        <position position="92"/>
    </location>
    <ligand>
        <name>DNA</name>
        <dbReference type="ChEBI" id="CHEBI:16991"/>
    </ligand>
</feature>
<feature type="binding site" evidence="2">
    <location>
        <position position="111"/>
    </location>
    <ligand>
        <name>DNA</name>
        <dbReference type="ChEBI" id="CHEBI:16991"/>
    </ligand>
</feature>
<feature type="binding site" evidence="2">
    <location>
        <position position="153"/>
    </location>
    <ligand>
        <name>DNA</name>
        <dbReference type="ChEBI" id="CHEBI:16991"/>
    </ligand>
</feature>
<organism>
    <name type="scientific">Rickettsia canadensis (strain McKiel)</name>
    <dbReference type="NCBI Taxonomy" id="293613"/>
    <lineage>
        <taxon>Bacteria</taxon>
        <taxon>Pseudomonadati</taxon>
        <taxon>Pseudomonadota</taxon>
        <taxon>Alphaproteobacteria</taxon>
        <taxon>Rickettsiales</taxon>
        <taxon>Rickettsiaceae</taxon>
        <taxon>Rickettsieae</taxon>
        <taxon>Rickettsia</taxon>
        <taxon>belli group</taxon>
    </lineage>
</organism>
<sequence length="273" mass="31471">MPELPEVETLKNSLKDKLIGLIIKNIELKRDNLRYNLSPLLTTEILNTNILNVRRRAKYLIIDFGNYYSLVIHLGMSGRFTVQPANYKIQKHDHVIFDLNNCEKLIFNDTRRFGMVYSFKTNFLEEKFFYNLGIEPLSDLLTLEYLKSKLITRTIAIKNLIMDNKIIVGVGNLYASESLHLARIHPHKLGRNLKDDEIENLIKSIREVLTKAITAGGTTLKNFVNGDSKPGYFTQQLRVYGREGQKCFNCSSTILKTKNSGRSTFYCKTCQYT</sequence>
<proteinExistence type="inferred from homology"/>
<keyword id="KW-0227">DNA damage</keyword>
<keyword id="KW-0234">DNA repair</keyword>
<keyword id="KW-0238">DNA-binding</keyword>
<keyword id="KW-0326">Glycosidase</keyword>
<keyword id="KW-0378">Hydrolase</keyword>
<keyword id="KW-0456">Lyase</keyword>
<keyword id="KW-0479">Metal-binding</keyword>
<keyword id="KW-0511">Multifunctional enzyme</keyword>
<keyword id="KW-0862">Zinc</keyword>
<keyword id="KW-0863">Zinc-finger</keyword>
<evidence type="ECO:0000250" key="1"/>
<evidence type="ECO:0000255" key="2">
    <source>
        <dbReference type="HAMAP-Rule" id="MF_00103"/>
    </source>
</evidence>
<accession>A8EZP5</accession>
<gene>
    <name evidence="2" type="primary">mutM</name>
    <name evidence="2" type="synonym">fpg</name>
    <name type="ordered locus">A1E_04515</name>
</gene>
<name>FPG_RICCK</name>
<comment type="function">
    <text evidence="2">Involved in base excision repair of DNA damaged by oxidation or by mutagenic agents. Acts as a DNA glycosylase that recognizes and removes damaged bases. Has a preference for oxidized purines, such as 7,8-dihydro-8-oxoguanine (8-oxoG). Has AP (apurinic/apyrimidinic) lyase activity and introduces nicks in the DNA strand. Cleaves the DNA backbone by beta-delta elimination to generate a single-strand break at the site of the removed base with both 3'- and 5'-phosphates.</text>
</comment>
<comment type="catalytic activity">
    <reaction evidence="2">
        <text>Hydrolysis of DNA containing ring-opened 7-methylguanine residues, releasing 2,6-diamino-4-hydroxy-5-(N-methyl)formamidopyrimidine.</text>
        <dbReference type="EC" id="3.2.2.23"/>
    </reaction>
</comment>
<comment type="catalytic activity">
    <reaction evidence="2">
        <text>2'-deoxyribonucleotide-(2'-deoxyribose 5'-phosphate)-2'-deoxyribonucleotide-DNA = a 3'-end 2'-deoxyribonucleotide-(2,3-dehydro-2,3-deoxyribose 5'-phosphate)-DNA + a 5'-end 5'-phospho-2'-deoxyribonucleoside-DNA + H(+)</text>
        <dbReference type="Rhea" id="RHEA:66592"/>
        <dbReference type="Rhea" id="RHEA-COMP:13180"/>
        <dbReference type="Rhea" id="RHEA-COMP:16897"/>
        <dbReference type="Rhea" id="RHEA-COMP:17067"/>
        <dbReference type="ChEBI" id="CHEBI:15378"/>
        <dbReference type="ChEBI" id="CHEBI:136412"/>
        <dbReference type="ChEBI" id="CHEBI:157695"/>
        <dbReference type="ChEBI" id="CHEBI:167181"/>
        <dbReference type="EC" id="4.2.99.18"/>
    </reaction>
</comment>
<comment type="cofactor">
    <cofactor evidence="2">
        <name>Zn(2+)</name>
        <dbReference type="ChEBI" id="CHEBI:29105"/>
    </cofactor>
    <text evidence="2">Binds 1 zinc ion per subunit.</text>
</comment>
<comment type="subunit">
    <text evidence="2">Monomer.</text>
</comment>
<comment type="similarity">
    <text evidence="2">Belongs to the FPG family.</text>
</comment>
<protein>
    <recommendedName>
        <fullName evidence="2">Formamidopyrimidine-DNA glycosylase</fullName>
        <shortName evidence="2">Fapy-DNA glycosylase</shortName>
        <ecNumber evidence="2">3.2.2.23</ecNumber>
    </recommendedName>
    <alternativeName>
        <fullName evidence="2">DNA-(apurinic or apyrimidinic site) lyase MutM</fullName>
        <shortName evidence="2">AP lyase MutM</shortName>
        <ecNumber evidence="2">4.2.99.18</ecNumber>
    </alternativeName>
</protein>
<dbReference type="EC" id="3.2.2.23" evidence="2"/>
<dbReference type="EC" id="4.2.99.18" evidence="2"/>
<dbReference type="EMBL" id="CP000409">
    <property type="protein sequence ID" value="ABV73828.1"/>
    <property type="molecule type" value="Genomic_DNA"/>
</dbReference>
<dbReference type="RefSeq" id="WP_012149023.1">
    <property type="nucleotide sequence ID" value="NC_009879.1"/>
</dbReference>
<dbReference type="SMR" id="A8EZP5"/>
<dbReference type="STRING" id="293613.A1E_04515"/>
<dbReference type="KEGG" id="rcm:A1E_04515"/>
<dbReference type="eggNOG" id="COG0266">
    <property type="taxonomic scope" value="Bacteria"/>
</dbReference>
<dbReference type="HOGENOM" id="CLU_038423_1_1_5"/>
<dbReference type="Proteomes" id="UP000007056">
    <property type="component" value="Chromosome"/>
</dbReference>
<dbReference type="GO" id="GO:0034039">
    <property type="term" value="F:8-oxo-7,8-dihydroguanine DNA N-glycosylase activity"/>
    <property type="evidence" value="ECO:0007669"/>
    <property type="project" value="TreeGrafter"/>
</dbReference>
<dbReference type="GO" id="GO:0140078">
    <property type="term" value="F:class I DNA-(apurinic or apyrimidinic site) endonuclease activity"/>
    <property type="evidence" value="ECO:0007669"/>
    <property type="project" value="UniProtKB-EC"/>
</dbReference>
<dbReference type="GO" id="GO:0003684">
    <property type="term" value="F:damaged DNA binding"/>
    <property type="evidence" value="ECO:0007669"/>
    <property type="project" value="InterPro"/>
</dbReference>
<dbReference type="GO" id="GO:0008270">
    <property type="term" value="F:zinc ion binding"/>
    <property type="evidence" value="ECO:0007669"/>
    <property type="project" value="UniProtKB-UniRule"/>
</dbReference>
<dbReference type="GO" id="GO:0006284">
    <property type="term" value="P:base-excision repair"/>
    <property type="evidence" value="ECO:0007669"/>
    <property type="project" value="InterPro"/>
</dbReference>
<dbReference type="CDD" id="cd08966">
    <property type="entry name" value="EcFpg-like_N"/>
    <property type="match status" value="1"/>
</dbReference>
<dbReference type="FunFam" id="1.10.8.50:FF:000003">
    <property type="entry name" value="Formamidopyrimidine-DNA glycosylase"/>
    <property type="match status" value="1"/>
</dbReference>
<dbReference type="Gene3D" id="1.10.8.50">
    <property type="match status" value="1"/>
</dbReference>
<dbReference type="Gene3D" id="3.20.190.10">
    <property type="entry name" value="MutM-like, N-terminal"/>
    <property type="match status" value="1"/>
</dbReference>
<dbReference type="HAMAP" id="MF_00103">
    <property type="entry name" value="Fapy_DNA_glycosyl"/>
    <property type="match status" value="1"/>
</dbReference>
<dbReference type="InterPro" id="IPR015886">
    <property type="entry name" value="DNA_glyclase/AP_lyase_DNA-bd"/>
</dbReference>
<dbReference type="InterPro" id="IPR015887">
    <property type="entry name" value="DNA_glyclase_Znf_dom_DNA_BS"/>
</dbReference>
<dbReference type="InterPro" id="IPR020629">
    <property type="entry name" value="Formamido-pyr_DNA_Glyclase"/>
</dbReference>
<dbReference type="InterPro" id="IPR012319">
    <property type="entry name" value="FPG_cat"/>
</dbReference>
<dbReference type="InterPro" id="IPR035937">
    <property type="entry name" value="MutM-like_N-ter"/>
</dbReference>
<dbReference type="InterPro" id="IPR010979">
    <property type="entry name" value="Ribosomal_uS13-like_H2TH"/>
</dbReference>
<dbReference type="InterPro" id="IPR000214">
    <property type="entry name" value="Znf_DNA_glyclase/AP_lyase"/>
</dbReference>
<dbReference type="InterPro" id="IPR010663">
    <property type="entry name" value="Znf_FPG/IleRS"/>
</dbReference>
<dbReference type="NCBIfam" id="TIGR00577">
    <property type="entry name" value="fpg"/>
    <property type="match status" value="1"/>
</dbReference>
<dbReference type="NCBIfam" id="NF002211">
    <property type="entry name" value="PRK01103.1"/>
    <property type="match status" value="1"/>
</dbReference>
<dbReference type="PANTHER" id="PTHR22993">
    <property type="entry name" value="FORMAMIDOPYRIMIDINE-DNA GLYCOSYLASE"/>
    <property type="match status" value="1"/>
</dbReference>
<dbReference type="PANTHER" id="PTHR22993:SF9">
    <property type="entry name" value="FORMAMIDOPYRIMIDINE-DNA GLYCOSYLASE"/>
    <property type="match status" value="1"/>
</dbReference>
<dbReference type="Pfam" id="PF01149">
    <property type="entry name" value="Fapy_DNA_glyco"/>
    <property type="match status" value="1"/>
</dbReference>
<dbReference type="Pfam" id="PF06831">
    <property type="entry name" value="H2TH"/>
    <property type="match status" value="1"/>
</dbReference>
<dbReference type="Pfam" id="PF06827">
    <property type="entry name" value="zf-FPG_IleRS"/>
    <property type="match status" value="1"/>
</dbReference>
<dbReference type="SMART" id="SM00898">
    <property type="entry name" value="Fapy_DNA_glyco"/>
    <property type="match status" value="1"/>
</dbReference>
<dbReference type="SMART" id="SM01232">
    <property type="entry name" value="H2TH"/>
    <property type="match status" value="1"/>
</dbReference>
<dbReference type="SUPFAM" id="SSF57716">
    <property type="entry name" value="Glucocorticoid receptor-like (DNA-binding domain)"/>
    <property type="match status" value="1"/>
</dbReference>
<dbReference type="SUPFAM" id="SSF81624">
    <property type="entry name" value="N-terminal domain of MutM-like DNA repair proteins"/>
    <property type="match status" value="1"/>
</dbReference>
<dbReference type="SUPFAM" id="SSF46946">
    <property type="entry name" value="S13-like H2TH domain"/>
    <property type="match status" value="1"/>
</dbReference>
<dbReference type="PROSITE" id="PS51068">
    <property type="entry name" value="FPG_CAT"/>
    <property type="match status" value="1"/>
</dbReference>
<dbReference type="PROSITE" id="PS01242">
    <property type="entry name" value="ZF_FPG_1"/>
    <property type="match status" value="1"/>
</dbReference>
<dbReference type="PROSITE" id="PS51066">
    <property type="entry name" value="ZF_FPG_2"/>
    <property type="match status" value="1"/>
</dbReference>
<reference key="1">
    <citation type="submission" date="2007-09" db="EMBL/GenBank/DDBJ databases">
        <title>Complete genome sequence of Rickettsia canadensis.</title>
        <authorList>
            <person name="Madan A."/>
            <person name="Fahey J."/>
            <person name="Helton E."/>
            <person name="Ketteman M."/>
            <person name="Madan A."/>
            <person name="Rodrigues S."/>
            <person name="Sanchez A."/>
            <person name="Whiting M."/>
            <person name="Dasch G."/>
            <person name="Eremeeva M."/>
        </authorList>
    </citation>
    <scope>NUCLEOTIDE SEQUENCE [LARGE SCALE GENOMIC DNA]</scope>
    <source>
        <strain>McKiel</strain>
    </source>
</reference>